<sequence length="529" mass="59578">MLVLFETSVGYAIFKVLNEKKLQEVDSLWKEFETPEKANKIVKLKHFEKFQDTAEALAAFTALMEGKINKQLKKVLKKIVKEAHEPLAVADAKLGGVIKEKLNLSCIHSPVVNELMRGIRSQMDGLIPGVEPREMAAMCLGLAHSLSRYRLKFSADKVDTMIVQAISLLDDLDKELNNYIMRCREWYGWHFPELGKIISDNLTYCKCLQKVGDRKNYASAKLSELLPEEVEAEVKAAAEISMGTEVSEEDICNILHLCTQVIEISEYRTQLYEYLQNRMMAIAPNVTVMVGELVGARLIAHAGSLLNLAKHAASTVQILGAEKALFRALKSRRDTPKYGLIYHASLVGQTSPKHKGKISRMLAAKTVLAIRYDAFGEDSSSAMGVENRAKLEARLRTLEDRGIRKISGTGKALAKTEKYEHKSEVKTYDPSGDSTLPTCSKKRKIEQVDKEDEITEKKAKKAKIKVKVEEEEEEKVAEEEETSVKKKKKRGKKKHIKEEPLSEEEPCTSTAIASPEKKKKKKKKRENED</sequence>
<accession>Q9Y2X3</accession>
<accession>Q53SA4</accession>
<accession>Q6PK08</accession>
<accession>Q9P036</accession>
<accession>Q9UFN3</accession>
<evidence type="ECO:0000255" key="1">
    <source>
        <dbReference type="PROSITE-ProRule" id="PRU00690"/>
    </source>
</evidence>
<evidence type="ECO:0000256" key="2">
    <source>
        <dbReference type="SAM" id="MobiDB-lite"/>
    </source>
</evidence>
<evidence type="ECO:0000269" key="3">
    <source>
    </source>
</evidence>
<evidence type="ECO:0000269" key="4">
    <source>
    </source>
</evidence>
<evidence type="ECO:0000269" key="5">
    <source>
    </source>
</evidence>
<evidence type="ECO:0000269" key="6">
    <source>
    </source>
</evidence>
<evidence type="ECO:0000269" key="7">
    <source>
    </source>
</evidence>
<evidence type="ECO:0000269" key="8">
    <source>
    </source>
</evidence>
<evidence type="ECO:0000269" key="9">
    <source>
    </source>
</evidence>
<evidence type="ECO:0000269" key="10">
    <source>
    </source>
</evidence>
<evidence type="ECO:0000305" key="11"/>
<evidence type="ECO:0000312" key="12">
    <source>
        <dbReference type="HGNC" id="HGNC:29926"/>
    </source>
</evidence>
<evidence type="ECO:0007744" key="13">
    <source>
        <dbReference type="PDB" id="7MQ8"/>
    </source>
</evidence>
<evidence type="ECO:0007744" key="14">
    <source>
        <dbReference type="PDB" id="7MQ9"/>
    </source>
</evidence>
<evidence type="ECO:0007744" key="15">
    <source>
        <dbReference type="PDB" id="7MQA"/>
    </source>
</evidence>
<evidence type="ECO:0007744" key="16">
    <source>
    </source>
</evidence>
<evidence type="ECO:0007744" key="17">
    <source>
    </source>
</evidence>
<evidence type="ECO:0007744" key="18">
    <source>
    </source>
</evidence>
<evidence type="ECO:0007744" key="19">
    <source>
    </source>
</evidence>
<evidence type="ECO:0007744" key="20">
    <source>
    </source>
</evidence>
<evidence type="ECO:0007744" key="21">
    <source>
    </source>
</evidence>
<evidence type="ECO:0007744" key="22">
    <source>
    </source>
</evidence>
<evidence type="ECO:0007744" key="23">
    <source>
    </source>
</evidence>
<evidence type="ECO:0007744" key="24">
    <source>
    </source>
</evidence>
<evidence type="ECO:0007744" key="25">
    <source>
    </source>
</evidence>
<evidence type="ECO:0007744" key="26">
    <source>
    </source>
</evidence>
<evidence type="ECO:0007744" key="27">
    <source>
    </source>
</evidence>
<evidence type="ECO:0007744" key="28">
    <source>
    </source>
</evidence>
<evidence type="ECO:0007744" key="29">
    <source>
    </source>
</evidence>
<protein>
    <recommendedName>
        <fullName evidence="11">Nucleolar protein 58</fullName>
    </recommendedName>
    <alternativeName>
        <fullName>Nucleolar protein 5</fullName>
    </alternativeName>
</protein>
<proteinExistence type="evidence at protein level"/>
<feature type="chain" id="PRO_0000219023" description="Nucleolar protein 58">
    <location>
        <begin position="1"/>
        <end position="529"/>
    </location>
</feature>
<feature type="domain" description="Nop" evidence="1">
    <location>
        <begin position="282"/>
        <end position="400"/>
    </location>
</feature>
<feature type="region of interest" description="Sufficient for interaction with NOPCHAP1" evidence="8">
    <location>
        <begin position="155"/>
        <end position="400"/>
    </location>
</feature>
<feature type="region of interest" description="Disordered" evidence="2">
    <location>
        <begin position="409"/>
        <end position="529"/>
    </location>
</feature>
<feature type="compositionally biased region" description="Basic and acidic residues" evidence="2">
    <location>
        <begin position="414"/>
        <end position="427"/>
    </location>
</feature>
<feature type="compositionally biased region" description="Acidic residues" evidence="2">
    <location>
        <begin position="469"/>
        <end position="481"/>
    </location>
</feature>
<feature type="compositionally biased region" description="Basic residues" evidence="2">
    <location>
        <begin position="485"/>
        <end position="495"/>
    </location>
</feature>
<feature type="compositionally biased region" description="Basic residues" evidence="2">
    <location>
        <begin position="517"/>
        <end position="529"/>
    </location>
</feature>
<feature type="modified residue" description="Phosphothreonine" evidence="23">
    <location>
        <position position="34"/>
    </location>
</feature>
<feature type="modified residue" description="Phosphoserine" evidence="17 23">
    <location>
        <position position="109"/>
    </location>
</feature>
<feature type="modified residue" description="Phosphoserine" evidence="23">
    <location>
        <position position="304"/>
    </location>
</feature>
<feature type="modified residue" description="Phosphoserine" evidence="18 21 23">
    <location>
        <position position="351"/>
    </location>
</feature>
<feature type="modified residue" description="Phosphoserine" evidence="21">
    <location>
        <position position="483"/>
    </location>
</feature>
<feature type="modified residue" description="Phosphoserine" evidence="16 18 19 20 21 22 23 24">
    <location>
        <position position="502"/>
    </location>
</feature>
<feature type="modified residue" description="Phosphoserine" evidence="16 18 19 20 21 22 23">
    <location>
        <position position="514"/>
    </location>
</feature>
<feature type="cross-link" description="Glycyl lysine isopeptide (Lys-Gly) (interchain with G-Cter in SUMO2)" evidence="29">
    <location>
        <position position="157"/>
    </location>
</feature>
<feature type="cross-link" description="Glycyl lysine isopeptide (Lys-Gly) (interchain with G-Cter in SUMO2)" evidence="29">
    <location>
        <position position="353"/>
    </location>
</feature>
<feature type="cross-link" description="Glycyl lysine isopeptide (Lys-Gly) (interchain with G-Cter in SUMO2)" evidence="29">
    <location>
        <position position="411"/>
    </location>
</feature>
<feature type="cross-link" description="Glycyl lysine isopeptide (Lys-Gly) (interchain with G-Cter in SUMO2)" evidence="26">
    <location>
        <position position="415"/>
    </location>
</feature>
<feature type="cross-link" description="Glycyl lysine isopeptide (Lys-Gly) (interchain with G-Cter in SUMO2)" evidence="29">
    <location>
        <position position="422"/>
    </location>
</feature>
<feature type="cross-link" description="Glycyl lysine isopeptide (Lys-Gly) (interchain with G-Cter in SUMO2)" evidence="29">
    <location>
        <position position="426"/>
    </location>
</feature>
<feature type="cross-link" description="Glycyl lysine isopeptide (Lys-Gly) (interchain with G-Cter in SUMO2)" evidence="29">
    <location>
        <position position="441"/>
    </location>
</feature>
<feature type="cross-link" description="Glycyl lysine isopeptide (Lys-Gly) (interchain with G-Cter in SUMO2)" evidence="29">
    <location>
        <position position="444"/>
    </location>
</feature>
<feature type="cross-link" description="Glycyl lysine isopeptide (Lys-Gly) (interchain with G-Cter in SUMO2)" evidence="25 29">
    <location>
        <position position="465"/>
    </location>
</feature>
<feature type="cross-link" description="Glycyl lysine isopeptide (Lys-Gly) (interchain with G-Cter in SUMO); alternate">
    <location>
        <position position="467"/>
    </location>
</feature>
<feature type="cross-link" description="Glycyl lysine isopeptide (Lys-Gly) (interchain with G-Cter in SUMO1); alternate" evidence="25">
    <location>
        <position position="467"/>
    </location>
</feature>
<feature type="cross-link" description="Glycyl lysine isopeptide (Lys-Gly) (interchain with G-Cter in SUMO2); alternate" evidence="25 26 27 28 29">
    <location>
        <position position="467"/>
    </location>
</feature>
<feature type="cross-link" description="Glycyl lysine isopeptide (Lys-Gly) (interchain with G-Cter in SUMO2)" evidence="29">
    <location>
        <position position="485"/>
    </location>
</feature>
<feature type="cross-link" description="Glycyl lysine isopeptide (Lys-Gly) (interchain with G-Cter in SUMO); alternate">
    <location>
        <position position="497"/>
    </location>
</feature>
<feature type="cross-link" description="Glycyl lysine isopeptide (Lys-Gly) (interchain with G-Cter in SUMO2); alternate" evidence="26 27 29">
    <location>
        <position position="497"/>
    </location>
</feature>
<feature type="sequence variant" id="VAR_059461" description="In dbSNP:rs34748654.">
    <original>N</original>
    <variation>T</variation>
    <location>
        <position position="387"/>
    </location>
</feature>
<feature type="sequence variant" id="VAR_059462" description="In dbSNP:rs34458926.">
    <original>A</original>
    <variation>P</variation>
    <location>
        <position position="389"/>
    </location>
</feature>
<feature type="sequence variant" id="VAR_059463" description="In dbSNP:rs35900977.">
    <original>D</original>
    <variation>A</variation>
    <location>
        <position position="400"/>
    </location>
</feature>
<feature type="sequence variant" id="VAR_059464" description="In dbSNP:rs34523815.">
    <original>T</original>
    <variation>P</variation>
    <location>
        <position position="508"/>
    </location>
</feature>
<feature type="mutagenesis site" description="Restricted to nucleoplasm. Abolishes interaction with NOPCHAP1." evidence="8">
    <original>A</original>
    <variation>P</variation>
    <location>
        <position position="283"/>
    </location>
</feature>
<feature type="mutagenesis site" description="Restricted to nucleoplasm. Decreases interaction with NOPCHAP1." evidence="8">
    <original>KHAA</original>
    <variation>AHAR</variation>
    <location>
        <begin position="310"/>
        <end position="313"/>
    </location>
</feature>
<feature type="sequence conflict" description="In Ref. 5; CAB55989." evidence="11" ref="5">
    <original>L</original>
    <variation>M</variation>
    <location>
        <position position="2"/>
    </location>
</feature>
<feature type="sequence conflict" description="In Ref. 5; CAB55989." evidence="11" ref="5">
    <original>G</original>
    <variation>V</variation>
    <location>
        <position position="129"/>
    </location>
</feature>
<feature type="sequence conflict" description="In Ref. 6; AAF29084." evidence="11" ref="6">
    <original>LTYCKCLQKVGDRKNYASAK</original>
    <variation>YHTASVYRKLAIGRLCLCQ</variation>
    <location>
        <begin position="202"/>
        <end position="221"/>
    </location>
</feature>
<feature type="sequence conflict" description="In Ref. 6; AAF29084." evidence="11" ref="6">
    <original>KAAAEISMGTEVSEEDICNILHLCTQ</original>
    <variation>EGSCRDIHGNRGFRRRYLQYSASLHP</variation>
    <location>
        <begin position="235"/>
        <end position="260"/>
    </location>
</feature>
<feature type="sequence conflict" description="In Ref. 5; CAB55989." evidence="11" ref="5">
    <original>M</original>
    <variation>V</variation>
    <location>
        <position position="280"/>
    </location>
</feature>
<gene>
    <name evidence="12" type="primary">NOP58</name>
    <name type="synonym">NOL5</name>
    <name type="synonym">NOP5</name>
    <name type="ORF">HSPC120</name>
</gene>
<name>NOP58_HUMAN</name>
<organism>
    <name type="scientific">Homo sapiens</name>
    <name type="common">Human</name>
    <dbReference type="NCBI Taxonomy" id="9606"/>
    <lineage>
        <taxon>Eukaryota</taxon>
        <taxon>Metazoa</taxon>
        <taxon>Chordata</taxon>
        <taxon>Craniata</taxon>
        <taxon>Vertebrata</taxon>
        <taxon>Euteleostomi</taxon>
        <taxon>Mammalia</taxon>
        <taxon>Eutheria</taxon>
        <taxon>Euarchontoglires</taxon>
        <taxon>Primates</taxon>
        <taxon>Haplorrhini</taxon>
        <taxon>Catarrhini</taxon>
        <taxon>Hominidae</taxon>
        <taxon>Homo</taxon>
    </lineage>
</organism>
<dbReference type="EMBL" id="AF123534">
    <property type="protein sequence ID" value="AAD27610.1"/>
    <property type="molecule type" value="mRNA"/>
</dbReference>
<dbReference type="EMBL" id="AF263608">
    <property type="protein sequence ID" value="AAF91394.1"/>
    <property type="molecule type" value="mRNA"/>
</dbReference>
<dbReference type="EMBL" id="AC064836">
    <property type="protein sequence ID" value="AAY24145.1"/>
    <property type="molecule type" value="Genomic_DNA"/>
</dbReference>
<dbReference type="EMBL" id="BC032592">
    <property type="protein sequence ID" value="AAH32592.1"/>
    <property type="molecule type" value="mRNA"/>
</dbReference>
<dbReference type="EMBL" id="BC009306">
    <property type="protein sequence ID" value="AAH09306.1"/>
    <property type="molecule type" value="mRNA"/>
</dbReference>
<dbReference type="EMBL" id="AL117554">
    <property type="protein sequence ID" value="CAB55989.2"/>
    <property type="molecule type" value="mRNA"/>
</dbReference>
<dbReference type="EMBL" id="AF161469">
    <property type="protein sequence ID" value="AAF29084.1"/>
    <property type="molecule type" value="mRNA"/>
</dbReference>
<dbReference type="CCDS" id="CCDS2353.1"/>
<dbReference type="PIR" id="T17299">
    <property type="entry name" value="T17299"/>
</dbReference>
<dbReference type="RefSeq" id="NP_057018.1">
    <property type="nucleotide sequence ID" value="NM_015934.5"/>
</dbReference>
<dbReference type="PDB" id="7MQ8">
    <property type="method" value="EM"/>
    <property type="resolution" value="3.60 A"/>
    <property type="chains" value="SB=1-529"/>
</dbReference>
<dbReference type="PDB" id="7MQ9">
    <property type="method" value="EM"/>
    <property type="resolution" value="3.87 A"/>
    <property type="chains" value="SB=1-529"/>
</dbReference>
<dbReference type="PDB" id="7MQA">
    <property type="method" value="EM"/>
    <property type="resolution" value="2.70 A"/>
    <property type="chains" value="SB=1-529"/>
</dbReference>
<dbReference type="PDBsum" id="7MQ8"/>
<dbReference type="PDBsum" id="7MQ9"/>
<dbReference type="PDBsum" id="7MQA"/>
<dbReference type="EMDB" id="EMD-23936"/>
<dbReference type="EMDB" id="EMD-23937"/>
<dbReference type="EMDB" id="EMD-23938"/>
<dbReference type="SMR" id="Q9Y2X3"/>
<dbReference type="BioGRID" id="119631">
    <property type="interactions" value="326"/>
</dbReference>
<dbReference type="ComplexPortal" id="CPX-2511">
    <property type="entry name" value="Small ribosomal subunit processome"/>
</dbReference>
<dbReference type="CORUM" id="Q9Y2X3"/>
<dbReference type="DIP" id="DIP-32926N"/>
<dbReference type="FunCoup" id="Q9Y2X3">
    <property type="interactions" value="3319"/>
</dbReference>
<dbReference type="IntAct" id="Q9Y2X3">
    <property type="interactions" value="111"/>
</dbReference>
<dbReference type="MINT" id="Q9Y2X3"/>
<dbReference type="STRING" id="9606.ENSP00000264279"/>
<dbReference type="GlyGen" id="Q9Y2X3">
    <property type="glycosylation" value="1 site, 1 O-linked glycan (1 site)"/>
</dbReference>
<dbReference type="iPTMnet" id="Q9Y2X3"/>
<dbReference type="MetOSite" id="Q9Y2X3"/>
<dbReference type="PhosphoSitePlus" id="Q9Y2X3"/>
<dbReference type="SwissPalm" id="Q9Y2X3"/>
<dbReference type="BioMuta" id="NOP58"/>
<dbReference type="DMDM" id="17380155"/>
<dbReference type="jPOST" id="Q9Y2X3"/>
<dbReference type="MassIVE" id="Q9Y2X3"/>
<dbReference type="PaxDb" id="9606-ENSP00000264279"/>
<dbReference type="PeptideAtlas" id="Q9Y2X3"/>
<dbReference type="ProteomicsDB" id="85927"/>
<dbReference type="Pumba" id="Q9Y2X3"/>
<dbReference type="Antibodypedia" id="19944">
    <property type="antibodies" value="153 antibodies from 27 providers"/>
</dbReference>
<dbReference type="DNASU" id="51602"/>
<dbReference type="Ensembl" id="ENST00000264279.10">
    <property type="protein sequence ID" value="ENSP00000264279.5"/>
    <property type="gene ID" value="ENSG00000055044.11"/>
</dbReference>
<dbReference type="GeneID" id="51602"/>
<dbReference type="KEGG" id="hsa:51602"/>
<dbReference type="MANE-Select" id="ENST00000264279.10">
    <property type="protein sequence ID" value="ENSP00000264279.5"/>
    <property type="RefSeq nucleotide sequence ID" value="NM_015934.5"/>
    <property type="RefSeq protein sequence ID" value="NP_057018.1"/>
</dbReference>
<dbReference type="UCSC" id="uc002uzb.4">
    <property type="organism name" value="human"/>
</dbReference>
<dbReference type="AGR" id="HGNC:29926"/>
<dbReference type="CTD" id="51602"/>
<dbReference type="DisGeNET" id="51602"/>
<dbReference type="GeneCards" id="NOP58"/>
<dbReference type="HGNC" id="HGNC:29926">
    <property type="gene designation" value="NOP58"/>
</dbReference>
<dbReference type="HPA" id="ENSG00000055044">
    <property type="expression patterns" value="Low tissue specificity"/>
</dbReference>
<dbReference type="MIM" id="616742">
    <property type="type" value="gene"/>
</dbReference>
<dbReference type="neXtProt" id="NX_Q9Y2X3"/>
<dbReference type="OpenTargets" id="ENSG00000055044"/>
<dbReference type="PharmGKB" id="PA164724092"/>
<dbReference type="VEuPathDB" id="HostDB:ENSG00000055044"/>
<dbReference type="eggNOG" id="KOG2572">
    <property type="taxonomic scope" value="Eukaryota"/>
</dbReference>
<dbReference type="GeneTree" id="ENSGT00940000153534"/>
<dbReference type="HOGENOM" id="CLU_015495_5_2_1"/>
<dbReference type="InParanoid" id="Q9Y2X3"/>
<dbReference type="OMA" id="MGMRSNW"/>
<dbReference type="OrthoDB" id="6780543at2759"/>
<dbReference type="PAN-GO" id="Q9Y2X3">
    <property type="GO annotations" value="3 GO annotations based on evolutionary models"/>
</dbReference>
<dbReference type="PhylomeDB" id="Q9Y2X3"/>
<dbReference type="TreeFam" id="TF105688"/>
<dbReference type="PathwayCommons" id="Q9Y2X3"/>
<dbReference type="Reactome" id="R-HSA-4570464">
    <property type="pathway name" value="SUMOylation of RNA binding proteins"/>
</dbReference>
<dbReference type="Reactome" id="R-HSA-6790901">
    <property type="pathway name" value="rRNA modification in the nucleus and cytosol"/>
</dbReference>
<dbReference type="Reactome" id="R-HSA-6791226">
    <property type="pathway name" value="Major pathway of rRNA processing in the nucleolus and cytosol"/>
</dbReference>
<dbReference type="SignaLink" id="Q9Y2X3"/>
<dbReference type="BioGRID-ORCS" id="51602">
    <property type="hits" value="819 hits in 1132 CRISPR screens"/>
</dbReference>
<dbReference type="CD-CODE" id="232F8A39">
    <property type="entry name" value="P-body"/>
</dbReference>
<dbReference type="CD-CODE" id="6F24707C">
    <property type="entry name" value="Cajal body"/>
</dbReference>
<dbReference type="CD-CODE" id="91857CE7">
    <property type="entry name" value="Nucleolus"/>
</dbReference>
<dbReference type="CD-CODE" id="DEE660B4">
    <property type="entry name" value="Stress granule"/>
</dbReference>
<dbReference type="ChiTaRS" id="NOP58">
    <property type="organism name" value="human"/>
</dbReference>
<dbReference type="GeneWiki" id="NOP5/NOP58"/>
<dbReference type="GenomeRNAi" id="51602"/>
<dbReference type="Pharos" id="Q9Y2X3">
    <property type="development level" value="Tbio"/>
</dbReference>
<dbReference type="PRO" id="PR:Q9Y2X3"/>
<dbReference type="Proteomes" id="UP000005640">
    <property type="component" value="Chromosome 2"/>
</dbReference>
<dbReference type="RNAct" id="Q9Y2X3">
    <property type="molecule type" value="protein"/>
</dbReference>
<dbReference type="Bgee" id="ENSG00000055044">
    <property type="expression patterns" value="Expressed in epithelial cell of pancreas and 189 other cell types or tissues"/>
</dbReference>
<dbReference type="ExpressionAtlas" id="Q9Y2X3">
    <property type="expression patterns" value="baseline and differential"/>
</dbReference>
<dbReference type="GO" id="GO:0031428">
    <property type="term" value="C:box C/D methylation guide snoRNP complex"/>
    <property type="evidence" value="ECO:0000314"/>
    <property type="project" value="UniProtKB"/>
</dbReference>
<dbReference type="GO" id="GO:0015030">
    <property type="term" value="C:Cajal body"/>
    <property type="evidence" value="ECO:0000314"/>
    <property type="project" value="BHF-UCL"/>
</dbReference>
<dbReference type="GO" id="GO:0005829">
    <property type="term" value="C:cytosol"/>
    <property type="evidence" value="ECO:0000314"/>
    <property type="project" value="HPA"/>
</dbReference>
<dbReference type="GO" id="GO:0001650">
    <property type="term" value="C:fibrillar center"/>
    <property type="evidence" value="ECO:0000314"/>
    <property type="project" value="HPA"/>
</dbReference>
<dbReference type="GO" id="GO:0016020">
    <property type="term" value="C:membrane"/>
    <property type="evidence" value="ECO:0007005"/>
    <property type="project" value="UniProtKB"/>
</dbReference>
<dbReference type="GO" id="GO:0005730">
    <property type="term" value="C:nucleolus"/>
    <property type="evidence" value="ECO:0000314"/>
    <property type="project" value="UniProtKB"/>
</dbReference>
<dbReference type="GO" id="GO:0005654">
    <property type="term" value="C:nucleoplasm"/>
    <property type="evidence" value="ECO:0000314"/>
    <property type="project" value="HPA"/>
</dbReference>
<dbReference type="GO" id="GO:0070761">
    <property type="term" value="C:pre-snoRNP complex"/>
    <property type="evidence" value="ECO:0000314"/>
    <property type="project" value="BHF-UCL"/>
</dbReference>
<dbReference type="GO" id="GO:0032040">
    <property type="term" value="C:small-subunit processome"/>
    <property type="evidence" value="ECO:0000314"/>
    <property type="project" value="UniProtKB"/>
</dbReference>
<dbReference type="GO" id="GO:0005732">
    <property type="term" value="C:sno(s)RNA-containing ribonucleoprotein complex"/>
    <property type="evidence" value="ECO:0000314"/>
    <property type="project" value="BHF-UCL"/>
</dbReference>
<dbReference type="GO" id="GO:0051117">
    <property type="term" value="F:ATPase binding"/>
    <property type="evidence" value="ECO:0000353"/>
    <property type="project" value="UniProtKB"/>
</dbReference>
<dbReference type="GO" id="GO:0003723">
    <property type="term" value="F:RNA binding"/>
    <property type="evidence" value="ECO:0007005"/>
    <property type="project" value="UniProtKB"/>
</dbReference>
<dbReference type="GO" id="GO:0030515">
    <property type="term" value="F:snoRNA binding"/>
    <property type="evidence" value="ECO:0000314"/>
    <property type="project" value="BHF-UCL"/>
</dbReference>
<dbReference type="GO" id="GO:0001094">
    <property type="term" value="F:TFIID-class transcription factor complex binding"/>
    <property type="evidence" value="ECO:0000353"/>
    <property type="project" value="UniProtKB"/>
</dbReference>
<dbReference type="GO" id="GO:0042274">
    <property type="term" value="P:ribosomal small subunit biogenesis"/>
    <property type="evidence" value="ECO:0000314"/>
    <property type="project" value="UniProtKB"/>
</dbReference>
<dbReference type="GO" id="GO:0006364">
    <property type="term" value="P:rRNA processing"/>
    <property type="evidence" value="ECO:0000304"/>
    <property type="project" value="UniProtKB"/>
</dbReference>
<dbReference type="GO" id="GO:0048254">
    <property type="term" value="P:snoRNA localization"/>
    <property type="evidence" value="ECO:0000315"/>
    <property type="project" value="UniProtKB"/>
</dbReference>
<dbReference type="FunFam" id="1.10.246.90:FF:000004">
    <property type="entry name" value="Nucleolar protein 58"/>
    <property type="match status" value="1"/>
</dbReference>
<dbReference type="FunFam" id="1.10.287.4070:FF:000001">
    <property type="entry name" value="Probable Nucleolar protein 58"/>
    <property type="match status" value="1"/>
</dbReference>
<dbReference type="Gene3D" id="1.10.287.4070">
    <property type="match status" value="1"/>
</dbReference>
<dbReference type="Gene3D" id="1.10.246.90">
    <property type="entry name" value="Nop domain"/>
    <property type="match status" value="1"/>
</dbReference>
<dbReference type="InterPro" id="IPR045056">
    <property type="entry name" value="Nop56/Nop58"/>
</dbReference>
<dbReference type="InterPro" id="IPR012974">
    <property type="entry name" value="NOP58/56_N"/>
</dbReference>
<dbReference type="InterPro" id="IPR042239">
    <property type="entry name" value="Nop_C"/>
</dbReference>
<dbReference type="InterPro" id="IPR002687">
    <property type="entry name" value="Nop_dom"/>
</dbReference>
<dbReference type="InterPro" id="IPR036070">
    <property type="entry name" value="Nop_dom_sf"/>
</dbReference>
<dbReference type="InterPro" id="IPR012976">
    <property type="entry name" value="NOSIC"/>
</dbReference>
<dbReference type="PANTHER" id="PTHR10894">
    <property type="entry name" value="NUCLEOLAR PROTEIN 5 NUCLEOLAR PROTEIN NOP5 NOP58"/>
    <property type="match status" value="1"/>
</dbReference>
<dbReference type="PANTHER" id="PTHR10894:SF1">
    <property type="entry name" value="NUCLEOLAR PROTEIN 58"/>
    <property type="match status" value="1"/>
</dbReference>
<dbReference type="Pfam" id="PF01798">
    <property type="entry name" value="Nop"/>
    <property type="match status" value="1"/>
</dbReference>
<dbReference type="Pfam" id="PF08156">
    <property type="entry name" value="NOP5NT"/>
    <property type="match status" value="1"/>
</dbReference>
<dbReference type="SMART" id="SM00931">
    <property type="entry name" value="NOSIC"/>
    <property type="match status" value="1"/>
</dbReference>
<dbReference type="SUPFAM" id="SSF89124">
    <property type="entry name" value="Nop domain"/>
    <property type="match status" value="1"/>
</dbReference>
<dbReference type="PROSITE" id="PS51358">
    <property type="entry name" value="NOP"/>
    <property type="match status" value="1"/>
</dbReference>
<keyword id="KW-0002">3D-structure</keyword>
<keyword id="KW-1017">Isopeptide bond</keyword>
<keyword id="KW-0539">Nucleus</keyword>
<keyword id="KW-0597">Phosphoprotein</keyword>
<keyword id="KW-1267">Proteomics identification</keyword>
<keyword id="KW-1185">Reference proteome</keyword>
<keyword id="KW-0687">Ribonucleoprotein</keyword>
<keyword id="KW-0690">Ribosome biogenesis</keyword>
<keyword id="KW-0832">Ubl conjugation</keyword>
<reference key="1">
    <citation type="journal article" date="1999" name="RNA">
        <title>Human Nop5/Nop58 is a component common to the box C/D small nucleolar ribonucleoproteins.</title>
        <authorList>
            <person name="Lyman S.K."/>
            <person name="Gerace L."/>
            <person name="Baserga S.J."/>
        </authorList>
    </citation>
    <scope>NUCLEOTIDE SEQUENCE [MRNA]</scope>
    <scope>SUBUNIT</scope>
    <scope>SUBCELLULAR LOCATION</scope>
</reference>
<reference key="2">
    <citation type="journal article" date="2000" name="Gene">
        <title>Isolation and characterization of a novel PDGF-induced human gene.</title>
        <authorList>
            <person name="Nelson S.A."/>
            <person name="Santora K.E."/>
            <person name="LaRochelle W.J."/>
        </authorList>
    </citation>
    <scope>NUCLEOTIDE SEQUENCE [MRNA]</scope>
</reference>
<reference key="3">
    <citation type="journal article" date="2005" name="Nature">
        <title>Generation and annotation of the DNA sequences of human chromosomes 2 and 4.</title>
        <authorList>
            <person name="Hillier L.W."/>
            <person name="Graves T.A."/>
            <person name="Fulton R.S."/>
            <person name="Fulton L.A."/>
            <person name="Pepin K.H."/>
            <person name="Minx P."/>
            <person name="Wagner-McPherson C."/>
            <person name="Layman D."/>
            <person name="Wylie K."/>
            <person name="Sekhon M."/>
            <person name="Becker M.C."/>
            <person name="Fewell G.A."/>
            <person name="Delehaunty K.D."/>
            <person name="Miner T.L."/>
            <person name="Nash W.E."/>
            <person name="Kremitzki C."/>
            <person name="Oddy L."/>
            <person name="Du H."/>
            <person name="Sun H."/>
            <person name="Bradshaw-Cordum H."/>
            <person name="Ali J."/>
            <person name="Carter J."/>
            <person name="Cordes M."/>
            <person name="Harris A."/>
            <person name="Isak A."/>
            <person name="van Brunt A."/>
            <person name="Nguyen C."/>
            <person name="Du F."/>
            <person name="Courtney L."/>
            <person name="Kalicki J."/>
            <person name="Ozersky P."/>
            <person name="Abbott S."/>
            <person name="Armstrong J."/>
            <person name="Belter E.A."/>
            <person name="Caruso L."/>
            <person name="Cedroni M."/>
            <person name="Cotton M."/>
            <person name="Davidson T."/>
            <person name="Desai A."/>
            <person name="Elliott G."/>
            <person name="Erb T."/>
            <person name="Fronick C."/>
            <person name="Gaige T."/>
            <person name="Haakenson W."/>
            <person name="Haglund K."/>
            <person name="Holmes A."/>
            <person name="Harkins R."/>
            <person name="Kim K."/>
            <person name="Kruchowski S.S."/>
            <person name="Strong C.M."/>
            <person name="Grewal N."/>
            <person name="Goyea E."/>
            <person name="Hou S."/>
            <person name="Levy A."/>
            <person name="Martinka S."/>
            <person name="Mead K."/>
            <person name="McLellan M.D."/>
            <person name="Meyer R."/>
            <person name="Randall-Maher J."/>
            <person name="Tomlinson C."/>
            <person name="Dauphin-Kohlberg S."/>
            <person name="Kozlowicz-Reilly A."/>
            <person name="Shah N."/>
            <person name="Swearengen-Shahid S."/>
            <person name="Snider J."/>
            <person name="Strong J.T."/>
            <person name="Thompson J."/>
            <person name="Yoakum M."/>
            <person name="Leonard S."/>
            <person name="Pearman C."/>
            <person name="Trani L."/>
            <person name="Radionenko M."/>
            <person name="Waligorski J.E."/>
            <person name="Wang C."/>
            <person name="Rock S.M."/>
            <person name="Tin-Wollam A.-M."/>
            <person name="Maupin R."/>
            <person name="Latreille P."/>
            <person name="Wendl M.C."/>
            <person name="Yang S.-P."/>
            <person name="Pohl C."/>
            <person name="Wallis J.W."/>
            <person name="Spieth J."/>
            <person name="Bieri T.A."/>
            <person name="Berkowicz N."/>
            <person name="Nelson J.O."/>
            <person name="Osborne J."/>
            <person name="Ding L."/>
            <person name="Meyer R."/>
            <person name="Sabo A."/>
            <person name="Shotland Y."/>
            <person name="Sinha P."/>
            <person name="Wohldmann P.E."/>
            <person name="Cook L.L."/>
            <person name="Hickenbotham M.T."/>
            <person name="Eldred J."/>
            <person name="Williams D."/>
            <person name="Jones T.A."/>
            <person name="She X."/>
            <person name="Ciccarelli F.D."/>
            <person name="Izaurralde E."/>
            <person name="Taylor J."/>
            <person name="Schmutz J."/>
            <person name="Myers R.M."/>
            <person name="Cox D.R."/>
            <person name="Huang X."/>
            <person name="McPherson J.D."/>
            <person name="Mardis E.R."/>
            <person name="Clifton S.W."/>
            <person name="Warren W.C."/>
            <person name="Chinwalla A.T."/>
            <person name="Eddy S.R."/>
            <person name="Marra M.A."/>
            <person name="Ovcharenko I."/>
            <person name="Furey T.S."/>
            <person name="Miller W."/>
            <person name="Eichler E.E."/>
            <person name="Bork P."/>
            <person name="Suyama M."/>
            <person name="Torrents D."/>
            <person name="Waterston R.H."/>
            <person name="Wilson R.K."/>
        </authorList>
    </citation>
    <scope>NUCLEOTIDE SEQUENCE [LARGE SCALE GENOMIC DNA]</scope>
</reference>
<reference key="4">
    <citation type="journal article" date="2004" name="Genome Res.">
        <title>The status, quality, and expansion of the NIH full-length cDNA project: the Mammalian Gene Collection (MGC).</title>
        <authorList>
            <consortium name="The MGC Project Team"/>
        </authorList>
    </citation>
    <scope>NUCLEOTIDE SEQUENCE [LARGE SCALE MRNA]</scope>
    <source>
        <tissue>Skin</tissue>
        <tissue>Uterus</tissue>
    </source>
</reference>
<reference key="5">
    <citation type="journal article" date="2007" name="BMC Genomics">
        <title>The full-ORF clone resource of the German cDNA consortium.</title>
        <authorList>
            <person name="Bechtel S."/>
            <person name="Rosenfelder H."/>
            <person name="Duda A."/>
            <person name="Schmidt C.P."/>
            <person name="Ernst U."/>
            <person name="Wellenreuther R."/>
            <person name="Mehrle A."/>
            <person name="Schuster C."/>
            <person name="Bahr A."/>
            <person name="Bloecker H."/>
            <person name="Heubner D."/>
            <person name="Hoerlein A."/>
            <person name="Michel G."/>
            <person name="Wedler H."/>
            <person name="Koehrer K."/>
            <person name="Ottenwaelder B."/>
            <person name="Poustka A."/>
            <person name="Wiemann S."/>
            <person name="Schupp I."/>
        </authorList>
    </citation>
    <scope>NUCLEOTIDE SEQUENCE [LARGE SCALE MRNA] OF 1-442</scope>
    <source>
        <tissue>Brain</tissue>
    </source>
</reference>
<reference key="6">
    <citation type="journal article" date="2000" name="Genome Res.">
        <title>Cloning and functional analysis of cDNAs with open reading frames for 300 previously undefined genes expressed in CD34+ hematopoietic stem/progenitor cells.</title>
        <authorList>
            <person name="Zhang Q.-H."/>
            <person name="Ye M."/>
            <person name="Wu X.-Y."/>
            <person name="Ren S.-X."/>
            <person name="Zhao M."/>
            <person name="Zhao C.-J."/>
            <person name="Fu G."/>
            <person name="Shen Y."/>
            <person name="Fan H.-Y."/>
            <person name="Lu G."/>
            <person name="Zhong M."/>
            <person name="Xu X.-R."/>
            <person name="Han Z.-G."/>
            <person name="Zhang J.-W."/>
            <person name="Tao J."/>
            <person name="Huang Q.-H."/>
            <person name="Zhou J."/>
            <person name="Hu G.-X."/>
            <person name="Gu J."/>
            <person name="Chen S.-J."/>
            <person name="Chen Z."/>
        </authorList>
    </citation>
    <scope>NUCLEOTIDE SEQUENCE [LARGE SCALE MRNA] OF 64-529</scope>
    <source>
        <tissue>Umbilical cord blood</tissue>
    </source>
</reference>
<reference key="7">
    <citation type="journal article" date="2002" name="Mol. Biol. Cell">
        <title>Functional proteomic analysis of human nucleolus.</title>
        <authorList>
            <person name="Scherl A."/>
            <person name="Coute Y."/>
            <person name="Deon C."/>
            <person name="Calle A."/>
            <person name="Kindbeiter K."/>
            <person name="Sanchez J.-C."/>
            <person name="Greco A."/>
            <person name="Hochstrasser D.F."/>
            <person name="Diaz J.-J."/>
        </authorList>
    </citation>
    <scope>SUBCELLULAR LOCATION [LARGE SCALE ANALYSIS]</scope>
    <source>
        <tissue>Cervix carcinoma</tissue>
    </source>
</reference>
<reference key="8">
    <citation type="journal article" date="2002" name="Mol. Cell. Biol.">
        <title>Conserved stem II of the box C/D motif is essential for nucleolar localization and is required, along with the 15.5K protein, for the hierarchical assembly of the box C/D snoRNP.</title>
        <authorList>
            <person name="Watkins N.J."/>
            <person name="Dickmanns A."/>
            <person name="Luhrmann R."/>
        </authorList>
    </citation>
    <scope>ASSOCIATION WITH U14 BOX C/D SNORNA</scope>
</reference>
<reference key="9">
    <citation type="journal article" date="2004" name="Mol. Cell">
        <title>Assembly and maturation of the U3 snoRNP in the nucleoplasm in a large dynamic multiprotein complex.</title>
        <authorList>
            <person name="Watkins N.J."/>
            <person name="Lemm I."/>
            <person name="Ingelfinger D."/>
            <person name="Schneider C."/>
            <person name="Hossbach M."/>
            <person name="Urlaub H."/>
            <person name="Luehrmann R."/>
        </authorList>
    </citation>
    <scope>FUNCTION IN BOX C/D SNORNA BIOGENESIS</scope>
    <scope>ASSOCIATION WITH U3 BOX C/D SNORNA</scope>
</reference>
<reference key="10">
    <citation type="journal article" date="2006" name="Cell">
        <title>Global, in vivo, and site-specific phosphorylation dynamics in signaling networks.</title>
        <authorList>
            <person name="Olsen J.V."/>
            <person name="Blagoev B."/>
            <person name="Gnad F."/>
            <person name="Macek B."/>
            <person name="Kumar C."/>
            <person name="Mortensen P."/>
            <person name="Mann M."/>
        </authorList>
    </citation>
    <scope>PHOSPHORYLATION [LARGE SCALE ANALYSIS] AT SER-502 AND SER-514</scope>
    <scope>IDENTIFICATION BY MASS SPECTROMETRY [LARGE SCALE ANALYSIS]</scope>
    <source>
        <tissue>Cervix carcinoma</tissue>
    </source>
</reference>
<reference key="11">
    <citation type="journal article" date="2007" name="Mol. Cell. Biol.">
        <title>A dynamic scaffold of pre-snoRNP factors facilitates human box C/D snoRNP assembly.</title>
        <authorList>
            <person name="McKeegan K.S."/>
            <person name="Debieux C.M."/>
            <person name="Boulon S."/>
            <person name="Bertrand E."/>
            <person name="Watkins N.J."/>
        </authorList>
    </citation>
    <scope>FUNCTION IN U3 BOX C/D SNORNA BIOGENESIS</scope>
    <scope>ASSOCIATION WITH U8 BOX C/D SNORNA</scope>
    <scope>INTERACTION WITH NUFIP1 AND PIH1D1</scope>
</reference>
<reference key="12">
    <citation type="journal article" date="2007" name="Mol. Cell. Biol.">
        <title>Involvement of nuclear import and export factors in U8 box C/D snoRNP biogenesis.</title>
        <authorList>
            <person name="Watkins N.J."/>
            <person name="Lemm I."/>
            <person name="Luhrmann R."/>
        </authorList>
    </citation>
    <scope>ASSOCIATION WITH U8 BOX C/D SNORNP COMPLEX</scope>
</reference>
<reference key="13">
    <citation type="journal article" date="2008" name="J. Proteome Res.">
        <title>Combining protein-based IMAC, peptide-based IMAC, and MudPIT for efficient phosphoproteomic analysis.</title>
        <authorList>
            <person name="Cantin G.T."/>
            <person name="Yi W."/>
            <person name="Lu B."/>
            <person name="Park S.K."/>
            <person name="Xu T."/>
            <person name="Lee J.-D."/>
            <person name="Yates J.R. III"/>
        </authorList>
    </citation>
    <scope>PHOSPHORYLATION [LARGE SCALE ANALYSIS] AT SER-109</scope>
    <scope>IDENTIFICATION BY MASS SPECTROMETRY [LARGE SCALE ANALYSIS]</scope>
    <source>
        <tissue>Cervix carcinoma</tissue>
    </source>
</reference>
<reference key="14">
    <citation type="journal article" date="2008" name="Mol. Cell">
        <title>Kinase-selective enrichment enables quantitative phosphoproteomics of the kinome across the cell cycle.</title>
        <authorList>
            <person name="Daub H."/>
            <person name="Olsen J.V."/>
            <person name="Bairlein M."/>
            <person name="Gnad F."/>
            <person name="Oppermann F.S."/>
            <person name="Korner R."/>
            <person name="Greff Z."/>
            <person name="Keri G."/>
            <person name="Stemmann O."/>
            <person name="Mann M."/>
        </authorList>
    </citation>
    <scope>PHOSPHORYLATION [LARGE SCALE ANALYSIS] AT SER-502 AND SER-514</scope>
    <scope>IDENTIFICATION BY MASS SPECTROMETRY [LARGE SCALE ANALYSIS]</scope>
    <source>
        <tissue>Cervix carcinoma</tissue>
    </source>
</reference>
<reference key="15">
    <citation type="journal article" date="2008" name="Proc. Natl. Acad. Sci. U.S.A.">
        <title>A quantitative atlas of mitotic phosphorylation.</title>
        <authorList>
            <person name="Dephoure N."/>
            <person name="Zhou C."/>
            <person name="Villen J."/>
            <person name="Beausoleil S.A."/>
            <person name="Bakalarski C.E."/>
            <person name="Elledge S.J."/>
            <person name="Gygi S.P."/>
        </authorList>
    </citation>
    <scope>PHOSPHORYLATION [LARGE SCALE ANALYSIS] AT SER-351; SER-502 AND SER-514</scope>
    <scope>IDENTIFICATION BY MASS SPECTROMETRY [LARGE SCALE ANALYSIS]</scope>
    <source>
        <tissue>Cervix carcinoma</tissue>
    </source>
</reference>
<reference key="16">
    <citation type="journal article" date="2009" name="Anal. Chem.">
        <title>Lys-N and trypsin cover complementary parts of the phosphoproteome in a refined SCX-based approach.</title>
        <authorList>
            <person name="Gauci S."/>
            <person name="Helbig A.O."/>
            <person name="Slijper M."/>
            <person name="Krijgsveld J."/>
            <person name="Heck A.J."/>
            <person name="Mohammed S."/>
        </authorList>
    </citation>
    <scope>IDENTIFICATION BY MASS SPECTROMETRY [LARGE SCALE ANALYSIS]</scope>
</reference>
<reference key="17">
    <citation type="journal article" date="2009" name="Mol. Cell. Biol.">
        <title>Evidence that the AAA+ proteins TIP48 and TIP49 bridge interactions between 15.5K and the related NOP56 and NOP58 proteins during box C/D snoRNP biogenesis.</title>
        <authorList>
            <person name="McKeegan K.S."/>
            <person name="Debieux C.M."/>
            <person name="Watkins N.J."/>
        </authorList>
    </citation>
    <scope>FUNCTION IN U3 AND U8 BOX C/D SNORNA BIOGENESIS</scope>
    <scope>INTERACTION WITH RUVBL1 AND RUVBL2</scope>
</reference>
<reference key="18">
    <citation type="journal article" date="2009" name="Sci. Signal.">
        <title>Quantitative phosphoproteomic analysis of T cell receptor signaling reveals system-wide modulation of protein-protein interactions.</title>
        <authorList>
            <person name="Mayya V."/>
            <person name="Lundgren D.H."/>
            <person name="Hwang S.-I."/>
            <person name="Rezaul K."/>
            <person name="Wu L."/>
            <person name="Eng J.K."/>
            <person name="Rodionov V."/>
            <person name="Han D.K."/>
        </authorList>
    </citation>
    <scope>PHOSPHORYLATION [LARGE SCALE ANALYSIS] AT SER-502 AND SER-514</scope>
    <scope>IDENTIFICATION BY MASS SPECTROMETRY [LARGE SCALE ANALYSIS]</scope>
    <source>
        <tissue>Leukemic T-cell</tissue>
    </source>
</reference>
<reference key="19">
    <citation type="journal article" date="2010" name="Mol. Cell">
        <title>A proteomic screen for nucleolar SUMO targets shows SUMOylation modulates the function of Nop5/Nop58.</title>
        <authorList>
            <person name="Westman B.J."/>
            <person name="Verheggen C."/>
            <person name="Hutten S."/>
            <person name="Lam Y.W."/>
            <person name="Bertrand E."/>
            <person name="Lamond A.I."/>
        </authorList>
    </citation>
    <scope>SUMOYLATION AT LYS-467 AND LYS-497</scope>
</reference>
<reference key="20">
    <citation type="journal article" date="2010" name="Sci. Signal.">
        <title>Quantitative phosphoproteomics reveals widespread full phosphorylation site occupancy during mitosis.</title>
        <authorList>
            <person name="Olsen J.V."/>
            <person name="Vermeulen M."/>
            <person name="Santamaria A."/>
            <person name="Kumar C."/>
            <person name="Miller M.L."/>
            <person name="Jensen L.J."/>
            <person name="Gnad F."/>
            <person name="Cox J."/>
            <person name="Jensen T.S."/>
            <person name="Nigg E.A."/>
            <person name="Brunak S."/>
            <person name="Mann M."/>
        </authorList>
    </citation>
    <scope>PHOSPHORYLATION [LARGE SCALE ANALYSIS] AT SER-351; SER-483; SER-502 AND SER-514</scope>
    <scope>IDENTIFICATION BY MASS SPECTROMETRY [LARGE SCALE ANALYSIS]</scope>
    <source>
        <tissue>Cervix carcinoma</tissue>
    </source>
</reference>
<reference key="21">
    <citation type="journal article" date="2011" name="BMC Syst. Biol.">
        <title>Initial characterization of the human central proteome.</title>
        <authorList>
            <person name="Burkard T.R."/>
            <person name="Planyavsky M."/>
            <person name="Kaupe I."/>
            <person name="Breitwieser F.P."/>
            <person name="Buerckstuemmer T."/>
            <person name="Bennett K.L."/>
            <person name="Superti-Furga G."/>
            <person name="Colinge J."/>
        </authorList>
    </citation>
    <scope>IDENTIFICATION BY MASS SPECTROMETRY [LARGE SCALE ANALYSIS]</scope>
</reference>
<reference key="22">
    <citation type="journal article" date="2011" name="Sci. Signal.">
        <title>System-wide temporal characterization of the proteome and phosphoproteome of human embryonic stem cell differentiation.</title>
        <authorList>
            <person name="Rigbolt K.T."/>
            <person name="Prokhorova T.A."/>
            <person name="Akimov V."/>
            <person name="Henningsen J."/>
            <person name="Johansen P.T."/>
            <person name="Kratchmarova I."/>
            <person name="Kassem M."/>
            <person name="Mann M."/>
            <person name="Olsen J.V."/>
            <person name="Blagoev B."/>
        </authorList>
    </citation>
    <scope>PHOSPHORYLATION [LARGE SCALE ANALYSIS] AT SER-502 AND SER-514</scope>
    <scope>IDENTIFICATION BY MASS SPECTROMETRY [LARGE SCALE ANALYSIS]</scope>
</reference>
<reference key="23">
    <citation type="journal article" date="2013" name="J. Proteome Res.">
        <title>Toward a comprehensive characterization of a human cancer cell phosphoproteome.</title>
        <authorList>
            <person name="Zhou H."/>
            <person name="Di Palma S."/>
            <person name="Preisinger C."/>
            <person name="Peng M."/>
            <person name="Polat A.N."/>
            <person name="Heck A.J."/>
            <person name="Mohammed S."/>
        </authorList>
    </citation>
    <scope>PHOSPHORYLATION [LARGE SCALE ANALYSIS] AT THR-34; SER-109; SER-304; SER-351; SER-502 AND SER-514</scope>
    <scope>IDENTIFICATION BY MASS SPECTROMETRY [LARGE SCALE ANALYSIS]</scope>
    <source>
        <tissue>Cervix carcinoma</tissue>
        <tissue>Erythroleukemia</tissue>
    </source>
</reference>
<reference key="24">
    <citation type="journal article" date="2014" name="J. Proteomics">
        <title>An enzyme assisted RP-RPLC approach for in-depth analysis of human liver phosphoproteome.</title>
        <authorList>
            <person name="Bian Y."/>
            <person name="Song C."/>
            <person name="Cheng K."/>
            <person name="Dong M."/>
            <person name="Wang F."/>
            <person name="Huang J."/>
            <person name="Sun D."/>
            <person name="Wang L."/>
            <person name="Ye M."/>
            <person name="Zou H."/>
        </authorList>
    </citation>
    <scope>PHOSPHORYLATION [LARGE SCALE ANALYSIS] AT SER-502</scope>
    <scope>IDENTIFICATION BY MASS SPECTROMETRY [LARGE SCALE ANALYSIS]</scope>
    <source>
        <tissue>Liver</tissue>
    </source>
</reference>
<reference key="25">
    <citation type="journal article" date="2014" name="Nat. Struct. Mol. Biol.">
        <title>Uncovering global SUMOylation signaling networks in a site-specific manner.</title>
        <authorList>
            <person name="Hendriks I.A."/>
            <person name="D'Souza R.C."/>
            <person name="Yang B."/>
            <person name="Verlaan-de Vries M."/>
            <person name="Mann M."/>
            <person name="Vertegaal A.C."/>
        </authorList>
    </citation>
    <scope>SUMOYLATION [LARGE SCALE ANALYSIS] AT LYS-415; LYS-467 AND LYS-497</scope>
    <scope>IDENTIFICATION BY MASS SPECTROMETRY [LARGE SCALE ANALYSIS]</scope>
</reference>
<reference key="26">
    <citation type="journal article" date="2014" name="Proc. Natl. Acad. Sci. U.S.A.">
        <title>Mapping of SUMO sites and analysis of SUMOylation changes induced by external stimuli.</title>
        <authorList>
            <person name="Impens F."/>
            <person name="Radoshevich L."/>
            <person name="Cossart P."/>
            <person name="Ribet D."/>
        </authorList>
    </citation>
    <scope>SUMOYLATION [LARGE SCALE ANALYSIS] AT LYS-465 AND LYS-467</scope>
    <scope>IDENTIFICATION BY MASS SPECTROMETRY [LARGE SCALE ANALYSIS]</scope>
</reference>
<reference key="27">
    <citation type="journal article" date="2015" name="Cell Rep.">
        <title>SUMO-2 orchestrates chromatin modifiers in response to DNA damage.</title>
        <authorList>
            <person name="Hendriks I.A."/>
            <person name="Treffers L.W."/>
            <person name="Verlaan-de Vries M."/>
            <person name="Olsen J.V."/>
            <person name="Vertegaal A.C."/>
        </authorList>
    </citation>
    <scope>SUMOYLATION [LARGE SCALE ANALYSIS] AT LYS-467</scope>
    <scope>IDENTIFICATION BY MASS SPECTROMETRY [LARGE SCALE ANALYSIS]</scope>
</reference>
<reference key="28">
    <citation type="journal article" date="2015" name="Mol. Cell. Proteomics">
        <title>System-wide analysis of SUMOylation dynamics in response to replication stress reveals novel small ubiquitin-like modified target proteins and acceptor lysines relevant for genome stability.</title>
        <authorList>
            <person name="Xiao Z."/>
            <person name="Chang J.G."/>
            <person name="Hendriks I.A."/>
            <person name="Sigurdsson J.O."/>
            <person name="Olsen J.V."/>
            <person name="Vertegaal A.C."/>
        </authorList>
    </citation>
    <scope>SUMOYLATION [LARGE SCALE ANALYSIS] AT LYS-467 AND LYS-497</scope>
    <scope>IDENTIFICATION BY MASS SPECTROMETRY [LARGE SCALE ANALYSIS]</scope>
</reference>
<reference key="29">
    <citation type="journal article" date="2017" name="Nat. Struct. Mol. Biol.">
        <title>Site-specific mapping of the human SUMO proteome reveals co-modification with phosphorylation.</title>
        <authorList>
            <person name="Hendriks I.A."/>
            <person name="Lyon D."/>
            <person name="Young C."/>
            <person name="Jensen L.J."/>
            <person name="Vertegaal A.C."/>
            <person name="Nielsen M.L."/>
        </authorList>
    </citation>
    <scope>SUMOYLATION [LARGE SCALE ANALYSIS] AT LYS-157; LYS-353; LYS-411; LYS-422; LYS-426; LYS-441; LYS-444; LYS-465; LYS-467; LYS-485 AND LYS-497</scope>
    <scope>IDENTIFICATION BY MASS SPECTROMETRY [LARGE SCALE ANALYSIS]</scope>
</reference>
<reference key="30">
    <citation type="journal article" date="2021" name="Nucleic Acids Res.">
        <title>NOPCHAP1 is a PAQosome cofactor that helps loading NOP58 on RUVBL1/2 during box C/D snoRNP biogenesis.</title>
        <authorList>
            <person name="Abel Y."/>
            <person name="Paiva A.C.F."/>
            <person name="Bizarro J."/>
            <person name="Chagot M.E."/>
            <person name="Santo P.E."/>
            <person name="Robert M.C."/>
            <person name="Quinternet M."/>
            <person name="Vandermoere F."/>
            <person name="Sousa P.M.F."/>
            <person name="Fort P."/>
            <person name="Charpentier B."/>
            <person name="Manival X."/>
            <person name="Bandeiras T.M."/>
            <person name="Bertrand E."/>
            <person name="Verheggen C."/>
        </authorList>
    </citation>
    <scope>INTERACTION WITH NOPCHAP1</scope>
    <scope>SUBCELLULAR LOCATION</scope>
    <scope>MUTAGENESIS OF ALA-283 AND 310-LYS--ALA-313</scope>
</reference>
<reference key="31">
    <citation type="journal article" date="2024" name="Proc. Natl. Acad. Sci. U.S.A.">
        <title>Identification of FBLL1 as a neuron-specific RNA 2'-O-methyltransferase mediating neuronal differentiation.</title>
        <authorList>
            <person name="Zhang D."/>
            <person name="Li B."/>
            <person name="Xu H."/>
            <person name="Li J."/>
            <person name="Ma C."/>
            <person name="Ge W."/>
            <person name="Lu C."/>
            <person name="Cao X."/>
        </authorList>
    </citation>
    <scope>FUNCTION</scope>
    <scope>IDENTIFICATION AS PART OF A BOX C/D SMALL NUCLEOLAR RIBONUCLEOPROTEIN (SNORNP) COMPLEX</scope>
</reference>
<reference evidence="13 14 15" key="32">
    <citation type="journal article" date="2021" name="Science">
        <title>Nucleolar maturation of the human small subunit processome.</title>
        <authorList>
            <person name="Singh S."/>
            <person name="Vanden Broeck A."/>
            <person name="Miller L."/>
            <person name="Chaker-Margot M."/>
            <person name="Klinge S."/>
        </authorList>
    </citation>
    <scope>STRUCTURE BY ELECTRON MICROSCOPY (2.70 ANGSTROMS)</scope>
    <scope>FUNCTION</scope>
    <scope>SUBUNIT</scope>
    <scope>SUBCELLULAR LOCATION</scope>
</reference>
<comment type="function">
    <text evidence="4 5 6 9 10">Required for the biogenesis of box C/D snoRNAs such as U3, U8 and U14 snoRNAs (PubMed:15574333, PubMed:17636026, PubMed:19620283, PubMed:34516797). Part of the small subunit (SSU) processome, first precursor of the small eukaryotic ribosomal subunit. During the assembly of the SSU processome in the nucleolus, many ribosome biogenesis factors, an RNA chaperone and ribosomal proteins associate with the nascent pre-rRNA and work in concert to generate RNA folding, modifications, rearrangements and cleavage as well as targeted degradation of pre-ribosomal RNA by the RNA exosome (PubMed:34516797). Core component of box C/D small nucleolar ribonucleoprotein (snoRNP) complexes that function in methylation of multiple sites on ribosomal RNAs (rRNAs) and messenger RNAs (mRNAs) (PubMed:39570315).</text>
</comment>
<comment type="subunit">
    <text evidence="3 5 6 8 10">Core component of box C/D small nucleolar ribonucleoprotein (snoRNP) particles; the core proteins SNU13, NOP56, NOP58 and FBL or FBLL1 assemble stepwise onto the snoRNA (PubMed:10606270, PubMed:17636026, PubMed:39570315). Interacts with NOLC1/Nopp140. Interacts with NOPCHAP1, NUFIP1, RUVBL1 and RUVBL2; NOPCHAP1 bridges the association of NOP58 with RUVBL1:RUVBL2 and NUFIP1 (PubMed:33367824). Interacts with PIH1D1 (PubMed:17636026). Part of the small subunit (SSU) processome, composed of more than 70 proteins and the RNA chaperone small nucleolar RNA (snoRNA) U3 (PubMed:34516797).</text>
</comment>
<comment type="interaction">
    <interactant intactId="EBI-395469">
        <id>Q9Y2X3</id>
    </interactant>
    <interactant intactId="EBI-3916179">
        <id>Q8N5I9</id>
        <label>NOPCHAP1</label>
    </interactant>
    <organismsDiffer>false</organismsDiffer>
    <experiments>2</experiments>
</comment>
<comment type="interaction">
    <interactant intactId="EBI-395469">
        <id>Q9Y2X3</id>
    </interactant>
    <interactant intactId="EBI-2563549">
        <id>Q9UHK0</id>
        <label>NUFIP1</label>
    </interactant>
    <organismsDiffer>false</organismsDiffer>
    <experiments>3</experiments>
</comment>
<comment type="interaction">
    <interactant intactId="EBI-395469">
        <id>Q9Y2X3</id>
    </interactant>
    <interactant intactId="EBI-712228">
        <id>P55769</id>
        <label>SNU13</label>
    </interactant>
    <organismsDiffer>false</organismsDiffer>
    <experiments>2</experiments>
</comment>
<comment type="interaction">
    <interactant intactId="EBI-395469">
        <id>Q9Y2X3</id>
    </interactant>
    <interactant intactId="EBI-949244">
        <id>Q96RS0</id>
        <label>TGS1</label>
    </interactant>
    <organismsDiffer>false</organismsDiffer>
    <experiments>3</experiments>
</comment>
<comment type="subcellular location">
    <subcellularLocation>
        <location evidence="8 9">Nucleus</location>
        <location evidence="8 9">Nucleolus</location>
    </subcellularLocation>
    <subcellularLocation>
        <location evidence="8">Nucleus</location>
        <location evidence="8">Nucleoplasm</location>
    </subcellularLocation>
    <text evidence="8">Localizes to the nucleolus with a minor part present in the nucleoplasm.</text>
</comment>
<comment type="tissue specificity">
    <text>Ubiquitous.</text>
</comment>
<comment type="PTM">
    <text evidence="7">Sumoylation is essential for high-affinity binding to snoRNAs.</text>
</comment>
<comment type="similarity">
    <text evidence="11">Belongs to the NOP5/NOP56 family.</text>
</comment>